<comment type="miscellaneous">
    <text evidence="1">Partially overlaps STE20.</text>
</comment>
<comment type="caution">
    <text evidence="2">Product of a dubious gene prediction unlikely to encode a functional protein. Because of that it is not part of the S.cerevisiae S288c complete/reference proteome set.</text>
</comment>
<proteinExistence type="uncertain"/>
<accession>A0A023PXE5</accession>
<protein>
    <recommendedName>
        <fullName>Putative uncharacterized protein YHL006W-A</fullName>
    </recommendedName>
</protein>
<name>YH006_YEAST</name>
<sequence>MDLYPPASWAALVPFCKALTFKVPVVLGNRNPSPPSPLPPMALSLSLLIPLSRLSLSGSSDTADGSLLISCISRGSCGIFRMGCEAVKGRSLGCLLPRSNCTYGCMSLRKYVSVCSM</sequence>
<reference key="1">
    <citation type="journal article" date="1994" name="Science">
        <title>Complete nucleotide sequence of Saccharomyces cerevisiae chromosome VIII.</title>
        <authorList>
            <person name="Johnston M."/>
            <person name="Andrews S."/>
            <person name="Brinkman R."/>
            <person name="Cooper J."/>
            <person name="Ding H."/>
            <person name="Dover J."/>
            <person name="Du Z."/>
            <person name="Favello A."/>
            <person name="Fulton L."/>
            <person name="Gattung S."/>
            <person name="Geisel C."/>
            <person name="Kirsten J."/>
            <person name="Kucaba T."/>
            <person name="Hillier L.W."/>
            <person name="Jier M."/>
            <person name="Johnston L."/>
            <person name="Langston Y."/>
            <person name="Latreille P."/>
            <person name="Louis E.J."/>
            <person name="Macri C."/>
            <person name="Mardis E."/>
            <person name="Menezes S."/>
            <person name="Mouser L."/>
            <person name="Nhan M."/>
            <person name="Rifkin L."/>
            <person name="Riles L."/>
            <person name="St Peter H."/>
            <person name="Trevaskis E."/>
            <person name="Vaughan K."/>
            <person name="Vignati D."/>
            <person name="Wilcox L."/>
            <person name="Wohldman P."/>
            <person name="Waterston R."/>
            <person name="Wilson R."/>
            <person name="Vaudin M."/>
        </authorList>
    </citation>
    <scope>NUCLEOTIDE SEQUENCE [LARGE SCALE GENOMIC DNA]</scope>
    <source>
        <strain>ATCC 204508 / S288c</strain>
    </source>
</reference>
<reference key="2">
    <citation type="journal article" date="2014" name="G3 (Bethesda)">
        <title>The reference genome sequence of Saccharomyces cerevisiae: Then and now.</title>
        <authorList>
            <person name="Engel S.R."/>
            <person name="Dietrich F.S."/>
            <person name="Fisk D.G."/>
            <person name="Binkley G."/>
            <person name="Balakrishnan R."/>
            <person name="Costanzo M.C."/>
            <person name="Dwight S.S."/>
            <person name="Hitz B.C."/>
            <person name="Karra K."/>
            <person name="Nash R.S."/>
            <person name="Weng S."/>
            <person name="Wong E.D."/>
            <person name="Lloyd P."/>
            <person name="Skrzypek M.S."/>
            <person name="Miyasato S.R."/>
            <person name="Simison M."/>
            <person name="Cherry J.M."/>
        </authorList>
    </citation>
    <scope>GENOME REANNOTATION</scope>
    <source>
        <strain>ATCC 204508 / S288c</strain>
    </source>
</reference>
<dbReference type="EMBL" id="KJ412251">
    <property type="protein sequence ID" value="AHX39294.1"/>
    <property type="molecule type" value="Genomic_DNA"/>
</dbReference>
<dbReference type="PaxDb" id="4932-YHL006W-A"/>
<dbReference type="EnsemblFungi" id="YHL006W-A_mRNA">
    <property type="protein sequence ID" value="YHL006W-A"/>
    <property type="gene ID" value="YHL006W-A"/>
</dbReference>
<dbReference type="AGR" id="SGD:S000028771"/>
<dbReference type="SGD" id="S000028771">
    <property type="gene designation" value="YHL006W-A"/>
</dbReference>
<dbReference type="HOGENOM" id="CLU_2086669_0_0_1"/>
<dbReference type="ChiTaRS" id="YHL006W-A">
    <property type="organism name" value="yeast"/>
</dbReference>
<organism>
    <name type="scientific">Saccharomyces cerevisiae (strain ATCC 204508 / S288c)</name>
    <name type="common">Baker's yeast</name>
    <dbReference type="NCBI Taxonomy" id="559292"/>
    <lineage>
        <taxon>Eukaryota</taxon>
        <taxon>Fungi</taxon>
        <taxon>Dikarya</taxon>
        <taxon>Ascomycota</taxon>
        <taxon>Saccharomycotina</taxon>
        <taxon>Saccharomycetes</taxon>
        <taxon>Saccharomycetales</taxon>
        <taxon>Saccharomycetaceae</taxon>
        <taxon>Saccharomyces</taxon>
    </lineage>
</organism>
<gene>
    <name evidence="3" type="ordered locus">YHL006W-A</name>
</gene>
<feature type="chain" id="PRO_0000431015" description="Putative uncharacterized protein YHL006W-A">
    <location>
        <begin position="1"/>
        <end position="117"/>
    </location>
</feature>
<evidence type="ECO:0000305" key="1"/>
<evidence type="ECO:0000305" key="2">
    <source>
    </source>
</evidence>
<evidence type="ECO:0000312" key="3">
    <source>
        <dbReference type="SGD" id="S000028771"/>
    </source>
</evidence>